<reference key="1">
    <citation type="journal article" date="2008" name="ISME J.">
        <title>Comparative genomics of two ecotypes of the marine planktonic copiotroph Alteromonas macleodii suggests alternative lifestyles associated with different kinds of particulate organic matter.</title>
        <authorList>
            <person name="Ivars-Martinez E."/>
            <person name="Martin-Cuadrado A.-B."/>
            <person name="D'Auria G."/>
            <person name="Mira A."/>
            <person name="Ferriera S."/>
            <person name="Johnson J."/>
            <person name="Friedman R."/>
            <person name="Rodriguez-Valera F."/>
        </authorList>
    </citation>
    <scope>NUCLEOTIDE SEQUENCE [LARGE SCALE GENOMIC DNA]</scope>
    <source>
        <strain>DSM 17117 / CIP 110805 / LMG 28347 / Deep ecotype</strain>
    </source>
</reference>
<proteinExistence type="inferred from homology"/>
<comment type="function">
    <text evidence="1">Displays ATPase and GTPase activities.</text>
</comment>
<comment type="similarity">
    <text evidence="1">Belongs to the RapZ-like family.</text>
</comment>
<dbReference type="EMBL" id="CP001103">
    <property type="protein sequence ID" value="AEA96982.1"/>
    <property type="molecule type" value="Genomic_DNA"/>
</dbReference>
<dbReference type="SMR" id="B4RWG2"/>
<dbReference type="KEGG" id="amc:MADE_1004170"/>
<dbReference type="HOGENOM" id="CLU_059558_1_1_6"/>
<dbReference type="Proteomes" id="UP000001870">
    <property type="component" value="Chromosome"/>
</dbReference>
<dbReference type="GO" id="GO:0005524">
    <property type="term" value="F:ATP binding"/>
    <property type="evidence" value="ECO:0007669"/>
    <property type="project" value="UniProtKB-UniRule"/>
</dbReference>
<dbReference type="GO" id="GO:0005525">
    <property type="term" value="F:GTP binding"/>
    <property type="evidence" value="ECO:0007669"/>
    <property type="project" value="UniProtKB-UniRule"/>
</dbReference>
<dbReference type="Gene3D" id="3.40.50.300">
    <property type="entry name" value="P-loop containing nucleotide triphosphate hydrolases"/>
    <property type="match status" value="1"/>
</dbReference>
<dbReference type="HAMAP" id="MF_00636">
    <property type="entry name" value="RapZ_like"/>
    <property type="match status" value="1"/>
</dbReference>
<dbReference type="InterPro" id="IPR027417">
    <property type="entry name" value="P-loop_NTPase"/>
</dbReference>
<dbReference type="InterPro" id="IPR005337">
    <property type="entry name" value="RapZ-like"/>
</dbReference>
<dbReference type="InterPro" id="IPR053930">
    <property type="entry name" value="RapZ-like_N"/>
</dbReference>
<dbReference type="InterPro" id="IPR053931">
    <property type="entry name" value="RapZ_C"/>
</dbReference>
<dbReference type="NCBIfam" id="NF003828">
    <property type="entry name" value="PRK05416.1"/>
    <property type="match status" value="1"/>
</dbReference>
<dbReference type="PANTHER" id="PTHR30448">
    <property type="entry name" value="RNASE ADAPTER PROTEIN RAPZ"/>
    <property type="match status" value="1"/>
</dbReference>
<dbReference type="PANTHER" id="PTHR30448:SF0">
    <property type="entry name" value="RNASE ADAPTER PROTEIN RAPZ"/>
    <property type="match status" value="1"/>
</dbReference>
<dbReference type="Pfam" id="PF22740">
    <property type="entry name" value="PapZ_C"/>
    <property type="match status" value="1"/>
</dbReference>
<dbReference type="Pfam" id="PF03668">
    <property type="entry name" value="RapZ-like_N"/>
    <property type="match status" value="1"/>
</dbReference>
<dbReference type="PIRSF" id="PIRSF005052">
    <property type="entry name" value="P-loopkin"/>
    <property type="match status" value="1"/>
</dbReference>
<dbReference type="SUPFAM" id="SSF52540">
    <property type="entry name" value="P-loop containing nucleoside triphosphate hydrolases"/>
    <property type="match status" value="1"/>
</dbReference>
<evidence type="ECO:0000255" key="1">
    <source>
        <dbReference type="HAMAP-Rule" id="MF_00636"/>
    </source>
</evidence>
<protein>
    <recommendedName>
        <fullName evidence="1">Nucleotide-binding protein MADE_1004170</fullName>
    </recommendedName>
</protein>
<name>Y3196_ALTMD</name>
<keyword id="KW-0067">ATP-binding</keyword>
<keyword id="KW-0342">GTP-binding</keyword>
<keyword id="KW-0547">Nucleotide-binding</keyword>
<accession>B4RWG2</accession>
<accession>F2GA55</accession>
<feature type="chain" id="PRO_1000130728" description="Nucleotide-binding protein MADE_1004170">
    <location>
        <begin position="1"/>
        <end position="281"/>
    </location>
</feature>
<feature type="binding site" evidence="1">
    <location>
        <begin position="8"/>
        <end position="15"/>
    </location>
    <ligand>
        <name>ATP</name>
        <dbReference type="ChEBI" id="CHEBI:30616"/>
    </ligand>
</feature>
<feature type="binding site" evidence="1">
    <location>
        <begin position="56"/>
        <end position="59"/>
    </location>
    <ligand>
        <name>GTP</name>
        <dbReference type="ChEBI" id="CHEBI:37565"/>
    </ligand>
</feature>
<organism>
    <name type="scientific">Alteromonas mediterranea (strain DSM 17117 / CIP 110805 / LMG 28347 / Deep ecotype)</name>
    <dbReference type="NCBI Taxonomy" id="1774373"/>
    <lineage>
        <taxon>Bacteria</taxon>
        <taxon>Pseudomonadati</taxon>
        <taxon>Pseudomonadota</taxon>
        <taxon>Gammaproteobacteria</taxon>
        <taxon>Alteromonadales</taxon>
        <taxon>Alteromonadaceae</taxon>
        <taxon>Alteromonas/Salinimonas group</taxon>
        <taxon>Alteromonas</taxon>
    </lineage>
</organism>
<sequence>MKLIIISGRSGSGKSVALRALEDLGYYCVDNIPVNLLPTLTHTVVDEYDQVAVSIDVRNLPKNPDDLVEILDYLPSSWSMTIVYIDASDDVLVKRFSETRRLHPLAKLNKSLSEAIRAESALLAPIAERADLYLDTDKLTIHQLAELIRERILGKKSSRLVLVFESFGFKHGIPKDADYVFDARFLPNPHWEPDLKHLTGLDAPVEVFLGSQPVVTKFIWQIQNLITTWLPHLERNNRSYVTVAIGCTGGQHRSVYIAQTLSKTFSEIHPDVQIRHRELNQ</sequence>
<gene>
    <name type="ordered locus">MADE_1004170</name>
</gene>